<organism>
    <name type="scientific">Cyriopagopus hainanus</name>
    <name type="common">Chinese bird spider</name>
    <name type="synonym">Haplopelma hainanum</name>
    <dbReference type="NCBI Taxonomy" id="209901"/>
    <lineage>
        <taxon>Eukaryota</taxon>
        <taxon>Metazoa</taxon>
        <taxon>Ecdysozoa</taxon>
        <taxon>Arthropoda</taxon>
        <taxon>Chelicerata</taxon>
        <taxon>Arachnida</taxon>
        <taxon>Araneae</taxon>
        <taxon>Mygalomorphae</taxon>
        <taxon>Theraphosidae</taxon>
        <taxon>Haplopelma</taxon>
    </lineage>
</organism>
<keyword id="KW-1015">Disulfide bond</keyword>
<keyword id="KW-0872">Ion channel impairing toxin</keyword>
<keyword id="KW-0960">Knottin</keyword>
<keyword id="KW-0964">Secreted</keyword>
<keyword id="KW-0732">Signal</keyword>
<keyword id="KW-0800">Toxin</keyword>
<evidence type="ECO:0000250" key="1"/>
<evidence type="ECO:0000255" key="2"/>
<evidence type="ECO:0000256" key="3">
    <source>
        <dbReference type="SAM" id="MobiDB-lite"/>
    </source>
</evidence>
<evidence type="ECO:0000305" key="4"/>
<comment type="function">
    <text evidence="1">Probable ion channel inhibitor.</text>
</comment>
<comment type="subcellular location">
    <subcellularLocation>
        <location evidence="1">Secreted</location>
    </subcellularLocation>
</comment>
<comment type="tissue specificity">
    <text>Expressed by the venom gland.</text>
</comment>
<comment type="domain">
    <text evidence="1">The presence of a 'disulfide through disulfide knot' structurally defines this protein as a knottin.</text>
</comment>
<comment type="similarity">
    <text evidence="4">Belongs to the neurotoxin 14 (magi-1) family. 01 (HNTX-16) subfamily.</text>
</comment>
<feature type="signal peptide" evidence="2">
    <location>
        <begin position="1"/>
        <end position="21"/>
    </location>
</feature>
<feature type="propeptide" id="PRO_0000400925" evidence="1">
    <location>
        <begin position="22"/>
        <end position="74"/>
    </location>
</feature>
<feature type="peptide" id="PRO_0000400926" description="U11-theraphotoxin-Hhn1f">
    <location>
        <begin position="75"/>
        <end position="113"/>
    </location>
</feature>
<feature type="region of interest" description="Disordered" evidence="3">
    <location>
        <begin position="61"/>
        <end position="82"/>
    </location>
</feature>
<feature type="disulfide bond" evidence="1">
    <location>
        <begin position="75"/>
        <end position="90"/>
    </location>
</feature>
<feature type="disulfide bond" evidence="1">
    <location>
        <begin position="82"/>
        <end position="95"/>
    </location>
</feature>
<feature type="disulfide bond" evidence="1">
    <location>
        <begin position="89"/>
        <end position="110"/>
    </location>
</feature>
<reference key="1">
    <citation type="journal article" date="2010" name="J. Proteome Res.">
        <title>Molecular diversification of peptide toxins from the tarantula Haplopelma hainanum (Ornithoctonus hainana) venom based on transcriptomic, peptidomic, and genomic analyses.</title>
        <authorList>
            <person name="Tang X."/>
            <person name="Zhang Y."/>
            <person name="Hu W."/>
            <person name="Xu D."/>
            <person name="Tao H."/>
            <person name="Yang X."/>
            <person name="Li Y."/>
            <person name="Jiang L."/>
            <person name="Liang S."/>
        </authorList>
    </citation>
    <scope>NUCLEOTIDE SEQUENCE [LARGE SCALE MRNA]</scope>
    <source>
        <tissue>Venom gland</tissue>
    </source>
</reference>
<protein>
    <recommendedName>
        <fullName>U11-theraphotoxin-Hhn1f</fullName>
        <shortName>U11-TRTX-Hhn1f</shortName>
    </recommendedName>
    <alternativeName>
        <fullName>Hainantoxin-XVI-6</fullName>
        <shortName>HNTX-XVI-6</shortName>
    </alternativeName>
</protein>
<name>H16F1_CYRHA</name>
<sequence>MNTVRVTFLLVFVLAVSLGQADKDENRMEMQEKTEQGKSYLDFAENLLLQKLEELEAKLLEEDSKESRNSRQKRCIGEGVPCDENDPRCCSGLVCLKPTLHGIWYKSYYCYRK</sequence>
<dbReference type="EMBL" id="GU292952">
    <property type="protein sequence ID" value="ADB56768.1"/>
    <property type="molecule type" value="mRNA"/>
</dbReference>
<dbReference type="ArachnoServer" id="AS001737">
    <property type="toxin name" value="U11-theraphotoxin-Hhn1f"/>
</dbReference>
<dbReference type="GO" id="GO:0005576">
    <property type="term" value="C:extracellular region"/>
    <property type="evidence" value="ECO:0007669"/>
    <property type="project" value="UniProtKB-SubCell"/>
</dbReference>
<dbReference type="GO" id="GO:0019871">
    <property type="term" value="F:sodium channel inhibitor activity"/>
    <property type="evidence" value="ECO:0007669"/>
    <property type="project" value="InterPro"/>
</dbReference>
<dbReference type="GO" id="GO:0090729">
    <property type="term" value="F:toxin activity"/>
    <property type="evidence" value="ECO:0007669"/>
    <property type="project" value="UniProtKB-KW"/>
</dbReference>
<dbReference type="InterPro" id="IPR012627">
    <property type="entry name" value="Toxin_22"/>
</dbReference>
<dbReference type="Pfam" id="PF08092">
    <property type="entry name" value="Toxin_22"/>
    <property type="match status" value="1"/>
</dbReference>
<proteinExistence type="evidence at transcript level"/>
<accession>D2Y275</accession>